<sequence>MEARGKVVGVIGNLVTIEVVGTVSMNEIVFIKTGGRSLKAEIIRIRDGEVDAQVFEMTRGIAVGDDIEFTNKLLTVELGPGLLSQVYDGLQNPLPELAAQCGFFLERGLYLSALDRKKKWHFNATAKVGDIVVAGDFLGFVIEGTIKHKIMIPFDRRDSYSIVEIVSDGDYTIDDKIAVVENDAGGKHIITMSFHWPVKIPITNYKERLIPSEPMVTQTRIIDTFFPVAKGGTFCIPGPFGAGKTVLQQVTSRNADVDIVIIAACGERAGEVVETLKEFPELIDPRTGKSLMERTCIICNTSSMPVAAREASVYTAITIGEYYRQMGLDILLLADSTSRWAQAMREMSGRLEEIPGEEAFPAYLESVIASFYERAGIVVLNDGSFGSVTVGGSVSPAGGNFEEPVTQATLKVVGAFHGLTRERSDARKFPAINPLESWSKYRGVVEFGKTEYARDFLAKGNEINQMMKVVGEEGISNGDFLVYLKSELLDSCYLQQNSFDSVDAAVNPERQNYMFDMLYDILQSDFKFESKLEARGFINELRQNILDMNLTPFKEEKFNKLEVSLKNLVRSKKLDFRGA</sequence>
<organism>
    <name type="scientific">Borrelia hermsii (strain HS1 / DAH)</name>
    <dbReference type="NCBI Taxonomy" id="314723"/>
    <lineage>
        <taxon>Bacteria</taxon>
        <taxon>Pseudomonadati</taxon>
        <taxon>Spirochaetota</taxon>
        <taxon>Spirochaetia</taxon>
        <taxon>Spirochaetales</taxon>
        <taxon>Borreliaceae</taxon>
        <taxon>Borrelia</taxon>
    </lineage>
</organism>
<accession>B2S1S8</accession>
<keyword id="KW-0066">ATP synthesis</keyword>
<keyword id="KW-0067">ATP-binding</keyword>
<keyword id="KW-0375">Hydrogen ion transport</keyword>
<keyword id="KW-0406">Ion transport</keyword>
<keyword id="KW-0547">Nucleotide-binding</keyword>
<keyword id="KW-1278">Translocase</keyword>
<keyword id="KW-0813">Transport</keyword>
<dbReference type="EC" id="7.1.2.2" evidence="1"/>
<dbReference type="EMBL" id="CP000048">
    <property type="protein sequence ID" value="AAX16615.1"/>
    <property type="molecule type" value="Genomic_DNA"/>
</dbReference>
<dbReference type="RefSeq" id="WP_012421872.1">
    <property type="nucleotide sequence ID" value="NZ_CP073136.1"/>
</dbReference>
<dbReference type="SMR" id="B2S1S8"/>
<dbReference type="KEGG" id="bhr:BH0094"/>
<dbReference type="HOGENOM" id="CLU_008162_1_1_12"/>
<dbReference type="Proteomes" id="UP000008834">
    <property type="component" value="Chromosome"/>
</dbReference>
<dbReference type="GO" id="GO:0005524">
    <property type="term" value="F:ATP binding"/>
    <property type="evidence" value="ECO:0007669"/>
    <property type="project" value="UniProtKB-UniRule"/>
</dbReference>
<dbReference type="GO" id="GO:0046933">
    <property type="term" value="F:proton-transporting ATP synthase activity, rotational mechanism"/>
    <property type="evidence" value="ECO:0007669"/>
    <property type="project" value="UniProtKB-UniRule"/>
</dbReference>
<dbReference type="GO" id="GO:0046961">
    <property type="term" value="F:proton-transporting ATPase activity, rotational mechanism"/>
    <property type="evidence" value="ECO:0007669"/>
    <property type="project" value="InterPro"/>
</dbReference>
<dbReference type="GO" id="GO:0042777">
    <property type="term" value="P:proton motive force-driven plasma membrane ATP synthesis"/>
    <property type="evidence" value="ECO:0007669"/>
    <property type="project" value="UniProtKB-UniRule"/>
</dbReference>
<dbReference type="CDD" id="cd01426">
    <property type="entry name" value="ATP-synt_F1_V1_A1_AB_FliI_N"/>
    <property type="match status" value="1"/>
</dbReference>
<dbReference type="CDD" id="cd18111">
    <property type="entry name" value="ATP-synt_V_A-type_alpha_C"/>
    <property type="match status" value="1"/>
</dbReference>
<dbReference type="CDD" id="cd01134">
    <property type="entry name" value="V_A-ATPase_A"/>
    <property type="match status" value="1"/>
</dbReference>
<dbReference type="Gene3D" id="2.40.30.20">
    <property type="match status" value="1"/>
</dbReference>
<dbReference type="Gene3D" id="2.40.50.100">
    <property type="match status" value="1"/>
</dbReference>
<dbReference type="Gene3D" id="1.10.1140.10">
    <property type="entry name" value="Bovine Mitochondrial F1-atpase, Atp Synthase Beta Chain, Chain D, domain 3"/>
    <property type="match status" value="1"/>
</dbReference>
<dbReference type="Gene3D" id="3.40.50.300">
    <property type="entry name" value="P-loop containing nucleotide triphosphate hydrolases"/>
    <property type="match status" value="1"/>
</dbReference>
<dbReference type="HAMAP" id="MF_00309">
    <property type="entry name" value="ATP_synth_A_arch"/>
    <property type="match status" value="1"/>
</dbReference>
<dbReference type="InterPro" id="IPR055190">
    <property type="entry name" value="ATP-synt_VA_C"/>
</dbReference>
<dbReference type="InterPro" id="IPR031686">
    <property type="entry name" value="ATP-synth_a_Xtn"/>
</dbReference>
<dbReference type="InterPro" id="IPR023366">
    <property type="entry name" value="ATP_synth_asu-like_sf"/>
</dbReference>
<dbReference type="InterPro" id="IPR020003">
    <property type="entry name" value="ATPase_a/bsu_AS"/>
</dbReference>
<dbReference type="InterPro" id="IPR004100">
    <property type="entry name" value="ATPase_F1/V1/A1_a/bsu_N"/>
</dbReference>
<dbReference type="InterPro" id="IPR000194">
    <property type="entry name" value="ATPase_F1/V1/A1_a/bsu_nucl-bd"/>
</dbReference>
<dbReference type="InterPro" id="IPR024034">
    <property type="entry name" value="ATPase_F1/V1_b/a_C"/>
</dbReference>
<dbReference type="InterPro" id="IPR027417">
    <property type="entry name" value="P-loop_NTPase"/>
</dbReference>
<dbReference type="InterPro" id="IPR022878">
    <property type="entry name" value="V-ATPase_asu"/>
</dbReference>
<dbReference type="NCBIfam" id="NF003220">
    <property type="entry name" value="PRK04192.1"/>
    <property type="match status" value="1"/>
</dbReference>
<dbReference type="PANTHER" id="PTHR43607:SF1">
    <property type="entry name" value="H(+)-TRANSPORTING TWO-SECTOR ATPASE"/>
    <property type="match status" value="1"/>
</dbReference>
<dbReference type="PANTHER" id="PTHR43607">
    <property type="entry name" value="V-TYPE PROTON ATPASE CATALYTIC SUBUNIT A"/>
    <property type="match status" value="1"/>
</dbReference>
<dbReference type="Pfam" id="PF00006">
    <property type="entry name" value="ATP-synt_ab"/>
    <property type="match status" value="1"/>
</dbReference>
<dbReference type="Pfam" id="PF02874">
    <property type="entry name" value="ATP-synt_ab_N"/>
    <property type="match status" value="1"/>
</dbReference>
<dbReference type="Pfam" id="PF16886">
    <property type="entry name" value="ATP-synt_ab_Xtn"/>
    <property type="match status" value="1"/>
</dbReference>
<dbReference type="Pfam" id="PF22919">
    <property type="entry name" value="ATP-synt_VA_C"/>
    <property type="match status" value="1"/>
</dbReference>
<dbReference type="SUPFAM" id="SSF47917">
    <property type="entry name" value="C-terminal domain of alpha and beta subunits of F1 ATP synthase"/>
    <property type="match status" value="1"/>
</dbReference>
<dbReference type="SUPFAM" id="SSF52540">
    <property type="entry name" value="P-loop containing nucleoside triphosphate hydrolases"/>
    <property type="match status" value="1"/>
</dbReference>
<dbReference type="PROSITE" id="PS00152">
    <property type="entry name" value="ATPASE_ALPHA_BETA"/>
    <property type="match status" value="1"/>
</dbReference>
<feature type="chain" id="PRO_1000115632" description="V-type ATP synthase alpha chain">
    <location>
        <begin position="1"/>
        <end position="579"/>
    </location>
</feature>
<feature type="binding site" evidence="1">
    <location>
        <begin position="238"/>
        <end position="245"/>
    </location>
    <ligand>
        <name>ATP</name>
        <dbReference type="ChEBI" id="CHEBI:30616"/>
    </ligand>
</feature>
<reference key="1">
    <citation type="submission" date="2004-12" db="EMBL/GenBank/DDBJ databases">
        <title>The genome sequence of Borrelia hermsii and Borrelia turicatae: comparative analysis of two agents of endemic N. America relapsing fever.</title>
        <authorList>
            <person name="Porcella S.F."/>
            <person name="Raffel S.J."/>
            <person name="Schrumpf M.E."/>
            <person name="Montgomery B."/>
            <person name="Smith T."/>
            <person name="Schwan T.G."/>
        </authorList>
    </citation>
    <scope>NUCLEOTIDE SEQUENCE [LARGE SCALE GENOMIC DNA]</scope>
    <source>
        <strain>HS1 / DAH</strain>
    </source>
</reference>
<gene>
    <name evidence="1" type="primary">atpA</name>
    <name type="ordered locus">BH0094</name>
</gene>
<name>VATA_BORHD</name>
<protein>
    <recommendedName>
        <fullName evidence="1">V-type ATP synthase alpha chain</fullName>
        <ecNumber evidence="1">7.1.2.2</ecNumber>
    </recommendedName>
    <alternativeName>
        <fullName evidence="1">V-ATPase subunit A</fullName>
    </alternativeName>
</protein>
<comment type="function">
    <text evidence="1">Produces ATP from ADP in the presence of a proton gradient across the membrane. The V-type alpha chain is a catalytic subunit.</text>
</comment>
<comment type="catalytic activity">
    <reaction evidence="1">
        <text>ATP + H2O + 4 H(+)(in) = ADP + phosphate + 5 H(+)(out)</text>
        <dbReference type="Rhea" id="RHEA:57720"/>
        <dbReference type="ChEBI" id="CHEBI:15377"/>
        <dbReference type="ChEBI" id="CHEBI:15378"/>
        <dbReference type="ChEBI" id="CHEBI:30616"/>
        <dbReference type="ChEBI" id="CHEBI:43474"/>
        <dbReference type="ChEBI" id="CHEBI:456216"/>
        <dbReference type="EC" id="7.1.2.2"/>
    </reaction>
</comment>
<comment type="similarity">
    <text evidence="1">Belongs to the ATPase alpha/beta chains family.</text>
</comment>
<evidence type="ECO:0000255" key="1">
    <source>
        <dbReference type="HAMAP-Rule" id="MF_00309"/>
    </source>
</evidence>
<proteinExistence type="inferred from homology"/>